<keyword id="KW-0030">Aminoacyl-tRNA synthetase</keyword>
<keyword id="KW-0067">ATP-binding</keyword>
<keyword id="KW-0963">Cytoplasm</keyword>
<keyword id="KW-0436">Ligase</keyword>
<keyword id="KW-0547">Nucleotide-binding</keyword>
<keyword id="KW-0648">Protein biosynthesis</keyword>
<keyword id="KW-1185">Reference proteome</keyword>
<reference key="1">
    <citation type="journal article" date="2005" name="Genome Res.">
        <title>Living with two extremes: conclusions from the genome sequence of Natronomonas pharaonis.</title>
        <authorList>
            <person name="Falb M."/>
            <person name="Pfeiffer F."/>
            <person name="Palm P."/>
            <person name="Rodewald K."/>
            <person name="Hickmann V."/>
            <person name="Tittor J."/>
            <person name="Oesterhelt D."/>
        </authorList>
    </citation>
    <scope>NUCLEOTIDE SEQUENCE [LARGE SCALE GENOMIC DNA]</scope>
    <source>
        <strain>ATCC 35678 / DSM 2160 / CIP 103997 / JCM 8858 / NBRC 14720 / NCIMB 2260 / Gabara</strain>
    </source>
</reference>
<protein>
    <recommendedName>
        <fullName evidence="1">Valine--tRNA ligase</fullName>
        <ecNumber evidence="1">6.1.1.9</ecNumber>
    </recommendedName>
    <alternativeName>
        <fullName evidence="1">Valyl-tRNA synthetase</fullName>
        <shortName evidence="1">ValRS</shortName>
    </alternativeName>
</protein>
<gene>
    <name evidence="1" type="primary">valS</name>
    <name type="ordered locus">NP_0288A</name>
</gene>
<sequence length="872" mass="99041">MSEVPDSYDPDEAEQKWRDEWLESDVYSYDGDEERPDYIIDTPPPYPTGNLHIGNALGWCYMDYAARYHRLQGDDVLFPQGWDCHGLPTEVKVEENRDIHRTDVSREQFREWCVEHTDEQIAAMKETMRTLGFSQDWDHEFRTMDDSYWQETQRSFLQMADSDYVYQDEHPVNWCPRCETAIADAEVENEDREGTLYYITFSGADNDDIEIATTRPELLPACVAIAVDPDDDRFEGRVGDRFEVPIFGQEVELIADDDVDGDFGTGAVMICTFGDKQDVDWWAEHDLDLRPVVTEDGHLNERAGEFEGRSIDEAKDEIATALSKSGHLHKEEPTEQSVGCCWRCDTPIEILSKEQWFVKVDQEEILETAQDIAWYPDHMYERLEEWTEGMEWDWVISRQRVFATPIPAWECADCGHIELADESEVPVDPTNDEPAVGSCPECGSDDWVGETDVMDTWMDSSISPLYVAGWPDETFEPVQLREQGHDIIRTWAFYTILRTAAVTDEIPWEEALINGMVFGDDGNKMSKSRGNFVQPEEVVEEHSADAFRQAMALGGQPGSDIQFQWKEVTSASRFQTKLWNITKFASEHIDESTPDIEAPAYRDADEWILARCARVADEVADDMDEYRFDSALRTVREFVWHDLADDYLELIKGRLYEGRPGERKAAEHALFVSLSASLRMLSPFAPFITEEAWSHLPADGSVHNAAWPDPPAGDEAAEERGELIAEVAATIRGWKSDEGKPLNADLERVEVYIDEDRPLDTYDLADTVNGPVYIEEGTPSVELVPVGVDIEHSELGPVFRDKAGEVVGRLESADPAELQAELDTDGHVEFEVDGETVTVEPEMFDIVEEQRAESGEEVVVLEADDATVLVFE</sequence>
<dbReference type="EC" id="6.1.1.9" evidence="1"/>
<dbReference type="EMBL" id="CR936257">
    <property type="protein sequence ID" value="CAI48235.1"/>
    <property type="molecule type" value="Genomic_DNA"/>
</dbReference>
<dbReference type="RefSeq" id="WP_011321874.1">
    <property type="nucleotide sequence ID" value="NC_007426.1"/>
</dbReference>
<dbReference type="SMR" id="Q3IUE5"/>
<dbReference type="STRING" id="348780.NP_0288A"/>
<dbReference type="EnsemblBacteria" id="CAI48235">
    <property type="protein sequence ID" value="CAI48235"/>
    <property type="gene ID" value="NP_0288A"/>
</dbReference>
<dbReference type="GeneID" id="3703460"/>
<dbReference type="KEGG" id="nph:NP_0288A"/>
<dbReference type="eggNOG" id="arCOG00808">
    <property type="taxonomic scope" value="Archaea"/>
</dbReference>
<dbReference type="HOGENOM" id="CLU_001493_0_2_2"/>
<dbReference type="OrthoDB" id="23906at2157"/>
<dbReference type="Proteomes" id="UP000002698">
    <property type="component" value="Chromosome"/>
</dbReference>
<dbReference type="GO" id="GO:0005829">
    <property type="term" value="C:cytosol"/>
    <property type="evidence" value="ECO:0007669"/>
    <property type="project" value="TreeGrafter"/>
</dbReference>
<dbReference type="GO" id="GO:0002161">
    <property type="term" value="F:aminoacyl-tRNA deacylase activity"/>
    <property type="evidence" value="ECO:0007669"/>
    <property type="project" value="InterPro"/>
</dbReference>
<dbReference type="GO" id="GO:0005524">
    <property type="term" value="F:ATP binding"/>
    <property type="evidence" value="ECO:0007669"/>
    <property type="project" value="UniProtKB-UniRule"/>
</dbReference>
<dbReference type="GO" id="GO:0004832">
    <property type="term" value="F:valine-tRNA ligase activity"/>
    <property type="evidence" value="ECO:0007669"/>
    <property type="project" value="UniProtKB-UniRule"/>
</dbReference>
<dbReference type="GO" id="GO:0006438">
    <property type="term" value="P:valyl-tRNA aminoacylation"/>
    <property type="evidence" value="ECO:0007669"/>
    <property type="project" value="UniProtKB-UniRule"/>
</dbReference>
<dbReference type="CDD" id="cd07962">
    <property type="entry name" value="Anticodon_Ia_Val"/>
    <property type="match status" value="1"/>
</dbReference>
<dbReference type="CDD" id="cd00817">
    <property type="entry name" value="ValRS_core"/>
    <property type="match status" value="1"/>
</dbReference>
<dbReference type="FunFam" id="3.40.50.620:FF:000192">
    <property type="entry name" value="Valine--tRNA ligase"/>
    <property type="match status" value="1"/>
</dbReference>
<dbReference type="Gene3D" id="3.30.720.200">
    <property type="match status" value="1"/>
</dbReference>
<dbReference type="Gene3D" id="3.40.50.620">
    <property type="entry name" value="HUPs"/>
    <property type="match status" value="2"/>
</dbReference>
<dbReference type="Gene3D" id="1.10.730.10">
    <property type="entry name" value="Isoleucyl-tRNA Synthetase, Domain 1"/>
    <property type="match status" value="1"/>
</dbReference>
<dbReference type="Gene3D" id="3.90.740.10">
    <property type="entry name" value="Valyl/Leucyl/Isoleucyl-tRNA synthetase, editing domain"/>
    <property type="match status" value="1"/>
</dbReference>
<dbReference type="HAMAP" id="MF_02005">
    <property type="entry name" value="Val_tRNA_synth_type2"/>
    <property type="match status" value="1"/>
</dbReference>
<dbReference type="InterPro" id="IPR001412">
    <property type="entry name" value="aa-tRNA-synth_I_CS"/>
</dbReference>
<dbReference type="InterPro" id="IPR002300">
    <property type="entry name" value="aa-tRNA-synth_Ia"/>
</dbReference>
<dbReference type="InterPro" id="IPR033705">
    <property type="entry name" value="Anticodon_Ia_Val"/>
</dbReference>
<dbReference type="InterPro" id="IPR013155">
    <property type="entry name" value="M/V/L/I-tRNA-synth_anticd-bd"/>
</dbReference>
<dbReference type="InterPro" id="IPR014729">
    <property type="entry name" value="Rossmann-like_a/b/a_fold"/>
</dbReference>
<dbReference type="InterPro" id="IPR009080">
    <property type="entry name" value="tRNAsynth_Ia_anticodon-bd"/>
</dbReference>
<dbReference type="InterPro" id="IPR009008">
    <property type="entry name" value="Val/Leu/Ile-tRNA-synth_edit"/>
</dbReference>
<dbReference type="InterPro" id="IPR022874">
    <property type="entry name" value="Valine-tRNA_ligase_type_2"/>
</dbReference>
<dbReference type="InterPro" id="IPR002303">
    <property type="entry name" value="Valyl-tRNA_ligase"/>
</dbReference>
<dbReference type="NCBIfam" id="NF009687">
    <property type="entry name" value="PRK13208.1"/>
    <property type="match status" value="1"/>
</dbReference>
<dbReference type="NCBIfam" id="TIGR00422">
    <property type="entry name" value="valS"/>
    <property type="match status" value="1"/>
</dbReference>
<dbReference type="PANTHER" id="PTHR11946:SF93">
    <property type="entry name" value="VALINE--TRNA LIGASE, CHLOROPLASTIC_MITOCHONDRIAL 2"/>
    <property type="match status" value="1"/>
</dbReference>
<dbReference type="PANTHER" id="PTHR11946">
    <property type="entry name" value="VALYL-TRNA SYNTHETASES"/>
    <property type="match status" value="1"/>
</dbReference>
<dbReference type="Pfam" id="PF08264">
    <property type="entry name" value="Anticodon_1"/>
    <property type="match status" value="1"/>
</dbReference>
<dbReference type="Pfam" id="PF00133">
    <property type="entry name" value="tRNA-synt_1"/>
    <property type="match status" value="1"/>
</dbReference>
<dbReference type="PRINTS" id="PR00986">
    <property type="entry name" value="TRNASYNTHVAL"/>
</dbReference>
<dbReference type="SUPFAM" id="SSF47323">
    <property type="entry name" value="Anticodon-binding domain of a subclass of class I aminoacyl-tRNA synthetases"/>
    <property type="match status" value="1"/>
</dbReference>
<dbReference type="SUPFAM" id="SSF52374">
    <property type="entry name" value="Nucleotidylyl transferase"/>
    <property type="match status" value="1"/>
</dbReference>
<dbReference type="SUPFAM" id="SSF50677">
    <property type="entry name" value="ValRS/IleRS/LeuRS editing domain"/>
    <property type="match status" value="1"/>
</dbReference>
<dbReference type="PROSITE" id="PS00178">
    <property type="entry name" value="AA_TRNA_LIGASE_I"/>
    <property type="match status" value="1"/>
</dbReference>
<proteinExistence type="inferred from homology"/>
<comment type="function">
    <text evidence="1">Catalyzes the attachment of valine to tRNA(Val). As ValRS can inadvertently accommodate and process structurally similar amino acids such as threonine, to avoid such errors, it has a 'posttransfer' editing activity that hydrolyzes mischarged Thr-tRNA(Val) in a tRNA-dependent manner.</text>
</comment>
<comment type="catalytic activity">
    <reaction evidence="1">
        <text>tRNA(Val) + L-valine + ATP = L-valyl-tRNA(Val) + AMP + diphosphate</text>
        <dbReference type="Rhea" id="RHEA:10704"/>
        <dbReference type="Rhea" id="RHEA-COMP:9672"/>
        <dbReference type="Rhea" id="RHEA-COMP:9708"/>
        <dbReference type="ChEBI" id="CHEBI:30616"/>
        <dbReference type="ChEBI" id="CHEBI:33019"/>
        <dbReference type="ChEBI" id="CHEBI:57762"/>
        <dbReference type="ChEBI" id="CHEBI:78442"/>
        <dbReference type="ChEBI" id="CHEBI:78537"/>
        <dbReference type="ChEBI" id="CHEBI:456215"/>
        <dbReference type="EC" id="6.1.1.9"/>
    </reaction>
</comment>
<comment type="subcellular location">
    <subcellularLocation>
        <location evidence="1">Cytoplasm</location>
    </subcellularLocation>
</comment>
<comment type="domain">
    <text evidence="1">ValRS has two distinct active sites: one for aminoacylation and one for editing. The misactivated threonine is translocated from the active site to the editing site.</text>
</comment>
<comment type="similarity">
    <text evidence="1">Belongs to the class-I aminoacyl-tRNA synthetase family. ValS type 2 subfamily.</text>
</comment>
<accession>Q3IUE5</accession>
<feature type="chain" id="PRO_0000224629" description="Valine--tRNA ligase">
    <location>
        <begin position="1"/>
        <end position="872"/>
    </location>
</feature>
<feature type="short sequence motif" description="'HIGH' region">
    <location>
        <begin position="45"/>
        <end position="55"/>
    </location>
</feature>
<feature type="short sequence motif" description="'KMSKS' region">
    <location>
        <begin position="524"/>
        <end position="528"/>
    </location>
</feature>
<feature type="binding site" evidence="1">
    <location>
        <position position="527"/>
    </location>
    <ligand>
        <name>ATP</name>
        <dbReference type="ChEBI" id="CHEBI:30616"/>
    </ligand>
</feature>
<name>SYV_NATPD</name>
<evidence type="ECO:0000255" key="1">
    <source>
        <dbReference type="HAMAP-Rule" id="MF_02005"/>
    </source>
</evidence>
<organism>
    <name type="scientific">Natronomonas pharaonis (strain ATCC 35678 / DSM 2160 / CIP 103997 / JCM 8858 / NBRC 14720 / NCIMB 2260 / Gabara)</name>
    <name type="common">Halobacterium pharaonis</name>
    <dbReference type="NCBI Taxonomy" id="348780"/>
    <lineage>
        <taxon>Archaea</taxon>
        <taxon>Methanobacteriati</taxon>
        <taxon>Methanobacteriota</taxon>
        <taxon>Stenosarchaea group</taxon>
        <taxon>Halobacteria</taxon>
        <taxon>Halobacteriales</taxon>
        <taxon>Haloarculaceae</taxon>
        <taxon>Natronomonas</taxon>
    </lineage>
</organism>